<organism>
    <name type="scientific">Escherichia coli (strain K12)</name>
    <dbReference type="NCBI Taxonomy" id="83333"/>
    <lineage>
        <taxon>Bacteria</taxon>
        <taxon>Pseudomonadati</taxon>
        <taxon>Pseudomonadota</taxon>
        <taxon>Gammaproteobacteria</taxon>
        <taxon>Enterobacterales</taxon>
        <taxon>Enterobacteriaceae</taxon>
        <taxon>Escherichia</taxon>
    </lineage>
</organism>
<name>AK2H_ECOLI</name>
<reference key="1">
    <citation type="journal article" date="1983" name="J. Biol. Chem.">
        <title>Nucleotide sequence of the metL gene of Escherichia coli. Its product, the bifunctional aspartokinase II-homoserine dehydrogenase II, and the bifunctional product of the thrA gene, aspartokinase I-homoserine dehydrogenase I, derive from a common ancestor.</title>
        <authorList>
            <person name="Zakin M.M."/>
            <person name="Duchange N."/>
            <person name="Ferrara P."/>
            <person name="Cohen G.N."/>
        </authorList>
    </citation>
    <scope>NUCLEOTIDE SEQUENCE [GENOMIC DNA]</scope>
    <scope>PROTEIN SEQUENCE OF 2-10</scope>
</reference>
<reference key="2">
    <citation type="journal article" date="1993" name="Nucleic Acids Res.">
        <title>Analysis of the Escherichia coli genome. III. DNA sequence of the region from 87.2 to 89.2 minutes.</title>
        <authorList>
            <person name="Plunkett G. III"/>
            <person name="Burland V."/>
            <person name="Daniels D.L."/>
            <person name="Blattner F.R."/>
        </authorList>
    </citation>
    <scope>NUCLEOTIDE SEQUENCE [LARGE SCALE GENOMIC DNA]</scope>
    <source>
        <strain>K12 / MG1655 / ATCC 47076</strain>
    </source>
</reference>
<reference key="3">
    <citation type="journal article" date="1997" name="Science">
        <title>The complete genome sequence of Escherichia coli K-12.</title>
        <authorList>
            <person name="Blattner F.R."/>
            <person name="Plunkett G. III"/>
            <person name="Bloch C.A."/>
            <person name="Perna N.T."/>
            <person name="Burland V."/>
            <person name="Riley M."/>
            <person name="Collado-Vides J."/>
            <person name="Glasner J.D."/>
            <person name="Rode C.K."/>
            <person name="Mayhew G.F."/>
            <person name="Gregor J."/>
            <person name="Davis N.W."/>
            <person name="Kirkpatrick H.A."/>
            <person name="Goeden M.A."/>
            <person name="Rose D.J."/>
            <person name="Mau B."/>
            <person name="Shao Y."/>
        </authorList>
    </citation>
    <scope>NUCLEOTIDE SEQUENCE [LARGE SCALE GENOMIC DNA]</scope>
    <source>
        <strain>K12 / MG1655 / ATCC 47076</strain>
    </source>
</reference>
<reference key="4">
    <citation type="journal article" date="2006" name="Mol. Syst. Biol.">
        <title>Highly accurate genome sequences of Escherichia coli K-12 strains MG1655 and W3110.</title>
        <authorList>
            <person name="Hayashi K."/>
            <person name="Morooka N."/>
            <person name="Yamamoto Y."/>
            <person name="Fujita K."/>
            <person name="Isono K."/>
            <person name="Choi S."/>
            <person name="Ohtsubo E."/>
            <person name="Baba T."/>
            <person name="Wanner B.L."/>
            <person name="Mori H."/>
            <person name="Horiuchi T."/>
        </authorList>
    </citation>
    <scope>NUCLEOTIDE SEQUENCE [LARGE SCALE GENOMIC DNA]</scope>
    <source>
        <strain>K12 / W3110 / ATCC 27325 / DSM 5911</strain>
    </source>
</reference>
<proteinExistence type="evidence at protein level"/>
<keyword id="KW-0028">Amino-acid biosynthesis</keyword>
<keyword id="KW-0067">ATP-binding</keyword>
<keyword id="KW-0903">Direct protein sequencing</keyword>
<keyword id="KW-0418">Kinase</keyword>
<keyword id="KW-0457">Lysine biosynthesis</keyword>
<keyword id="KW-0479">Metal-binding</keyword>
<keyword id="KW-0486">Methionine biosynthesis</keyword>
<keyword id="KW-0511">Multifunctional enzyme</keyword>
<keyword id="KW-0520">NAD</keyword>
<keyword id="KW-0521">NADP</keyword>
<keyword id="KW-0547">Nucleotide-binding</keyword>
<keyword id="KW-0560">Oxidoreductase</keyword>
<keyword id="KW-1185">Reference proteome</keyword>
<keyword id="KW-0915">Sodium</keyword>
<keyword id="KW-0791">Threonine biosynthesis</keyword>
<keyword id="KW-0808">Transferase</keyword>
<protein>
    <recommendedName>
        <fullName>Bifunctional aspartokinase/homoserine dehydrogenase 2</fullName>
    </recommendedName>
    <alternativeName>
        <fullName>Aspartokinase II/homoserine dehydrogenase II</fullName>
        <shortName>AKII-HDII</shortName>
    </alternativeName>
    <domain>
        <recommendedName>
            <fullName>Aspartokinase</fullName>
            <ecNumber>2.7.2.4</ecNumber>
        </recommendedName>
    </domain>
    <domain>
        <recommendedName>
            <fullName>Homoserine dehydrogenase</fullName>
            <ecNumber>1.1.1.3</ecNumber>
        </recommendedName>
    </domain>
</protein>
<feature type="initiator methionine" description="Removed" evidence="6">
    <location>
        <position position="1"/>
    </location>
</feature>
<feature type="chain" id="PRO_0000066683" description="Bifunctional aspartokinase/homoserine dehydrogenase 2">
    <location>
        <begin position="2"/>
        <end position="810"/>
    </location>
</feature>
<feature type="region of interest" description="Aspartokinase">
    <location>
        <begin position="2"/>
        <end position="252"/>
    </location>
</feature>
<feature type="region of interest" description="Interface">
    <location>
        <begin position="253"/>
        <end position="463"/>
    </location>
</feature>
<feature type="region of interest" description="Homoserine dehydrogenase">
    <location>
        <begin position="464"/>
        <end position="810"/>
    </location>
</feature>
<feature type="active site" description="Proton donor" evidence="5">
    <location>
        <position position="676"/>
    </location>
</feature>
<feature type="binding site" evidence="1">
    <location>
        <position position="468"/>
    </location>
    <ligand>
        <name>NADP(+)</name>
        <dbReference type="ChEBI" id="CHEBI:58349"/>
    </ligand>
</feature>
<feature type="binding site" evidence="3">
    <location>
        <position position="469"/>
    </location>
    <ligand>
        <name>NAD(+)</name>
        <dbReference type="ChEBI" id="CHEBI:57540"/>
    </ligand>
</feature>
<feature type="binding site" evidence="1">
    <location>
        <position position="469"/>
    </location>
    <ligand>
        <name>NADP(+)</name>
        <dbReference type="ChEBI" id="CHEBI:58349"/>
    </ligand>
</feature>
<feature type="binding site" evidence="2">
    <location>
        <position position="469"/>
    </location>
    <ligand>
        <name>NADPH</name>
        <dbReference type="ChEBI" id="CHEBI:57783"/>
    </ligand>
</feature>
<feature type="binding site" evidence="3">
    <location>
        <position position="498"/>
    </location>
    <ligand>
        <name>NAD(+)</name>
        <dbReference type="ChEBI" id="CHEBI:57540"/>
    </ligand>
</feature>
<feature type="binding site" evidence="1">
    <location>
        <position position="501"/>
    </location>
    <ligand>
        <name>NADP(+)</name>
        <dbReference type="ChEBI" id="CHEBI:58349"/>
    </ligand>
</feature>
<feature type="binding site" evidence="3">
    <location>
        <position position="549"/>
    </location>
    <ligand>
        <name>NAD(+)</name>
        <dbReference type="ChEBI" id="CHEBI:57540"/>
    </ligand>
</feature>
<feature type="binding site" evidence="1">
    <location>
        <position position="549"/>
    </location>
    <ligand>
        <name>NADP(+)</name>
        <dbReference type="ChEBI" id="CHEBI:58349"/>
    </ligand>
</feature>
<feature type="binding site" evidence="2">
    <location>
        <position position="549"/>
    </location>
    <ligand>
        <name>NADPH</name>
        <dbReference type="ChEBI" id="CHEBI:57783"/>
    </ligand>
</feature>
<feature type="binding site" evidence="1">
    <location>
        <position position="573"/>
    </location>
    <ligand>
        <name>NADP(+)</name>
        <dbReference type="ChEBI" id="CHEBI:58349"/>
    </ligand>
</feature>
<feature type="binding site" evidence="2">
    <location>
        <position position="573"/>
    </location>
    <ligand>
        <name>NADPH</name>
        <dbReference type="ChEBI" id="CHEBI:57783"/>
    </ligand>
</feature>
<feature type="binding site" evidence="3">
    <location>
        <position position="603"/>
    </location>
    <ligand>
        <name>Na(+)</name>
        <dbReference type="ChEBI" id="CHEBI:29101"/>
    </ligand>
</feature>
<feature type="binding site" evidence="3">
    <location>
        <position position="605"/>
    </location>
    <ligand>
        <name>Na(+)</name>
        <dbReference type="ChEBI" id="CHEBI:29101"/>
    </ligand>
</feature>
<feature type="binding site" evidence="3">
    <location>
        <position position="607"/>
    </location>
    <ligand>
        <name>Na(+)</name>
        <dbReference type="ChEBI" id="CHEBI:29101"/>
    </ligand>
</feature>
<feature type="binding site" evidence="1">
    <location>
        <position position="658"/>
    </location>
    <ligand>
        <name>NADP(+)</name>
        <dbReference type="ChEBI" id="CHEBI:58349"/>
    </ligand>
</feature>
<feature type="binding site" evidence="3">
    <location>
        <position position="661"/>
    </location>
    <ligand>
        <name>L-homoserine</name>
        <dbReference type="ChEBI" id="CHEBI:57476"/>
    </ligand>
</feature>
<feature type="binding site" evidence="1">
    <location>
        <position position="661"/>
    </location>
    <ligand>
        <name>NADP(+)</name>
        <dbReference type="ChEBI" id="CHEBI:58349"/>
    </ligand>
</feature>
<feature type="binding site" evidence="3">
    <location>
        <position position="672"/>
    </location>
    <ligand>
        <name>L-homoserine</name>
        <dbReference type="ChEBI" id="CHEBI:57476"/>
    </ligand>
</feature>
<feature type="binding site" evidence="3">
    <location>
        <position position="791"/>
    </location>
    <ligand>
        <name>NAD(+)</name>
        <dbReference type="ChEBI" id="CHEBI:57540"/>
    </ligand>
</feature>
<feature type="binding site" evidence="1">
    <location>
        <position position="791"/>
    </location>
    <ligand>
        <name>NADP(+)</name>
        <dbReference type="ChEBI" id="CHEBI:58349"/>
    </ligand>
</feature>
<feature type="binding site" evidence="2">
    <location>
        <position position="791"/>
    </location>
    <ligand>
        <name>NADPH</name>
        <dbReference type="ChEBI" id="CHEBI:57783"/>
    </ligand>
</feature>
<feature type="sequence conflict" description="In Ref. 1; CAA23585." evidence="7" ref="1">
    <original>Q</original>
    <variation>R</variation>
    <location>
        <position position="56"/>
    </location>
</feature>
<feature type="sequence conflict" description="In Ref. 1; CAA23585." evidence="7" ref="1">
    <original>N</original>
    <variation>S</variation>
    <location>
        <position position="59"/>
    </location>
</feature>
<feature type="sequence conflict" description="In Ref. 1; CAA23585." evidence="7" ref="1">
    <original>A</original>
    <variation>G</variation>
    <location>
        <position position="333"/>
    </location>
</feature>
<feature type="sequence conflict" description="In Ref. 1; CAA23585." evidence="7" ref="1">
    <original>M</original>
    <variation>S</variation>
    <location>
        <position position="674"/>
    </location>
</feature>
<feature type="sequence conflict" description="In Ref. 1; CAA23585." evidence="7" ref="1">
    <original>A</original>
    <variation>R</variation>
    <location>
        <position position="762"/>
    </location>
</feature>
<sequence length="810" mass="88888">MSVIAQAGAKGRQLHKFGGSSLADVKCYLRVAGIMAEYSQPDDMMVVSAAGSTTNQLINWLKLSQTDRLSAHQVQQTLRRYQCDLISGLLPAEEADSLISAFVSDLERLAALLDSGINDAVYAEVVGHGEVWSARLMSAVLNQQGLPAAWLDAREFLRAERAAQPQVDEGLSYPLLQQLLVQHPGKRLVVTGFISRNNAGETVLLGRNGSDYSATQIGALAGVSRVTIWSDVAGVYSADPRKVKDACLLPLLRLDEASELARLAAPVLHARTLQPVSGSEIDLQLRCSYTPDQGSTRIERVLASGTGARIVTSHDDVCLIEFQVPASQDFKLAHKEIDQILKRAQVRPLAVGVHNDRQLLQFCYTSEVADSALKILDEAGLPGELRLRQGLALVAMVGAGVTRNPLHCHRFWQQLKGQPVEFTWQSDDGISLVAVLRTGPTESLIQGLHQSVFRAEKRIGLVLFGKGNIGSRWLELFAREQSTLSARTGFEFVLAGVVDSRRSLLSYDGLDASRALAFFNDEAVEQDEESLFLWMRAHPYDDLVVLDVTASQQLADQYLDFASHGFHVISANKLAGASDSNKYRQIHDAFEKTGRHWLYNATVGAGLPINHTVRDLIDSGDTILSISGIFSGTLSWLFLQFDGSVPFTELVDQAWQQGLTEPDPRDDLSGKDVMRKLVILAREAGYNIEPDQVRVESLVPAHCEGGSIDHFFENGDELNEQMVQRLEAAREMGLVLRYVARFDANGKARVGVEAVREDHPLASLLPCDNVFAIESRWYRDNPLVIRGPGAGRDVTAGAIQSDINRLAQLL</sequence>
<dbReference type="EC" id="2.7.2.4"/>
<dbReference type="EC" id="1.1.1.3"/>
<dbReference type="EMBL" id="V00305">
    <property type="protein sequence ID" value="CAA23585.1"/>
    <property type="molecule type" value="Genomic_DNA"/>
</dbReference>
<dbReference type="EMBL" id="L19201">
    <property type="protein sequence ID" value="AAB03072.1"/>
    <property type="molecule type" value="Genomic_DNA"/>
</dbReference>
<dbReference type="EMBL" id="U00096">
    <property type="protein sequence ID" value="AAC76922.1"/>
    <property type="molecule type" value="Genomic_DNA"/>
</dbReference>
<dbReference type="EMBL" id="AP009048">
    <property type="protein sequence ID" value="BAE77370.1"/>
    <property type="molecule type" value="Genomic_DNA"/>
</dbReference>
<dbReference type="PIR" id="S40883">
    <property type="entry name" value="DEECK2"/>
</dbReference>
<dbReference type="RefSeq" id="NP_418375.1">
    <property type="nucleotide sequence ID" value="NC_000913.3"/>
</dbReference>
<dbReference type="RefSeq" id="WP_000110772.1">
    <property type="nucleotide sequence ID" value="NZ_STEB01000037.1"/>
</dbReference>
<dbReference type="SMR" id="P00562"/>
<dbReference type="BioGRID" id="4261101">
    <property type="interactions" value="424"/>
</dbReference>
<dbReference type="DIP" id="DIP-10197N"/>
<dbReference type="FunCoup" id="P00562">
    <property type="interactions" value="496"/>
</dbReference>
<dbReference type="IntAct" id="P00562">
    <property type="interactions" value="3"/>
</dbReference>
<dbReference type="STRING" id="511145.b3940"/>
<dbReference type="jPOST" id="P00562"/>
<dbReference type="PaxDb" id="511145-b3940"/>
<dbReference type="EnsemblBacteria" id="AAC76922">
    <property type="protein sequence ID" value="AAC76922"/>
    <property type="gene ID" value="b3940"/>
</dbReference>
<dbReference type="GeneID" id="86861662"/>
<dbReference type="GeneID" id="948433"/>
<dbReference type="KEGG" id="ecj:JW3911"/>
<dbReference type="KEGG" id="eco:b3940"/>
<dbReference type="KEGG" id="ecoc:C3026_21290"/>
<dbReference type="PATRIC" id="fig|1411691.4.peg.2765"/>
<dbReference type="EchoBASE" id="EB0585"/>
<dbReference type="eggNOG" id="COG0460">
    <property type="taxonomic scope" value="Bacteria"/>
</dbReference>
<dbReference type="eggNOG" id="COG0527">
    <property type="taxonomic scope" value="Bacteria"/>
</dbReference>
<dbReference type="HOGENOM" id="CLU_009116_7_2_6"/>
<dbReference type="InParanoid" id="P00562"/>
<dbReference type="OMA" id="GAGVCKN"/>
<dbReference type="OrthoDB" id="9799110at2"/>
<dbReference type="PhylomeDB" id="P00562"/>
<dbReference type="BioCyc" id="EcoCyc:ASPKINIIHOMOSERDEHYDROGII-MONOMER"/>
<dbReference type="BioCyc" id="MetaCyc:ASPKINIIHOMOSERDEHYDROGII-MONOMER"/>
<dbReference type="UniPathway" id="UPA00034">
    <property type="reaction ID" value="UER00015"/>
</dbReference>
<dbReference type="UniPathway" id="UPA00050">
    <property type="reaction ID" value="UER00063"/>
</dbReference>
<dbReference type="UniPathway" id="UPA00050">
    <property type="reaction ID" value="UER00461"/>
</dbReference>
<dbReference type="UniPathway" id="UPA00051">
    <property type="reaction ID" value="UER00462"/>
</dbReference>
<dbReference type="UniPathway" id="UPA00051">
    <property type="reaction ID" value="UER00465"/>
</dbReference>
<dbReference type="PRO" id="PR:P00562"/>
<dbReference type="Proteomes" id="UP000000625">
    <property type="component" value="Chromosome"/>
</dbReference>
<dbReference type="GO" id="GO:0005829">
    <property type="term" value="C:cytosol"/>
    <property type="evidence" value="ECO:0000314"/>
    <property type="project" value="EcoCyc"/>
</dbReference>
<dbReference type="GO" id="GO:0004072">
    <property type="term" value="F:aspartate kinase activity"/>
    <property type="evidence" value="ECO:0000314"/>
    <property type="project" value="EcoCyc"/>
</dbReference>
<dbReference type="GO" id="GO:0005524">
    <property type="term" value="F:ATP binding"/>
    <property type="evidence" value="ECO:0007669"/>
    <property type="project" value="UniProtKB-KW"/>
</dbReference>
<dbReference type="GO" id="GO:0004412">
    <property type="term" value="F:homoserine dehydrogenase activity"/>
    <property type="evidence" value="ECO:0000314"/>
    <property type="project" value="EcoCyc"/>
</dbReference>
<dbReference type="GO" id="GO:0046872">
    <property type="term" value="F:metal ion binding"/>
    <property type="evidence" value="ECO:0007669"/>
    <property type="project" value="UniProtKB-KW"/>
</dbReference>
<dbReference type="GO" id="GO:0070403">
    <property type="term" value="F:NAD+ binding"/>
    <property type="evidence" value="ECO:0000250"/>
    <property type="project" value="UniProtKB"/>
</dbReference>
<dbReference type="GO" id="GO:0050661">
    <property type="term" value="F:NADP binding"/>
    <property type="evidence" value="ECO:0007669"/>
    <property type="project" value="InterPro"/>
</dbReference>
<dbReference type="GO" id="GO:0009090">
    <property type="term" value="P:homoserine biosynthetic process"/>
    <property type="evidence" value="ECO:0000314"/>
    <property type="project" value="EcoCyc"/>
</dbReference>
<dbReference type="GO" id="GO:0009089">
    <property type="term" value="P:lysine biosynthetic process via diaminopimelate"/>
    <property type="evidence" value="ECO:0000314"/>
    <property type="project" value="EcoCyc"/>
</dbReference>
<dbReference type="GO" id="GO:0009086">
    <property type="term" value="P:methionine biosynthetic process"/>
    <property type="evidence" value="ECO:0000250"/>
    <property type="project" value="UniProtKB"/>
</dbReference>
<dbReference type="GO" id="GO:0009088">
    <property type="term" value="P:threonine biosynthetic process"/>
    <property type="evidence" value="ECO:0000250"/>
    <property type="project" value="UniProtKB"/>
</dbReference>
<dbReference type="CDD" id="cd04257">
    <property type="entry name" value="AAK_AK-HSDH"/>
    <property type="match status" value="1"/>
</dbReference>
<dbReference type="CDD" id="cd04892">
    <property type="entry name" value="ACT_AK-like_2"/>
    <property type="match status" value="1"/>
</dbReference>
<dbReference type="FunFam" id="1.20.120.1320:FF:000003">
    <property type="entry name" value="Bifunctional aspartokinase/homoserine dehydrogenase"/>
    <property type="match status" value="1"/>
</dbReference>
<dbReference type="FunFam" id="3.30.360.10:FF:000006">
    <property type="entry name" value="Bifunctional aspartokinase/homoserine dehydrogenase"/>
    <property type="match status" value="1"/>
</dbReference>
<dbReference type="FunFam" id="3.40.1160.10:FF:000009">
    <property type="entry name" value="Bifunctional aspartokinase/homoserine dehydrogenase"/>
    <property type="match status" value="1"/>
</dbReference>
<dbReference type="FunFam" id="3.40.50.720:FF:000124">
    <property type="entry name" value="Bifunctional aspartokinase/homoserine dehydrogenase"/>
    <property type="match status" value="1"/>
</dbReference>
<dbReference type="Gene3D" id="3.40.1160.10">
    <property type="entry name" value="Acetylglutamate kinase-like"/>
    <property type="match status" value="1"/>
</dbReference>
<dbReference type="Gene3D" id="1.20.120.1320">
    <property type="entry name" value="Aspartokinase, catalytic domain"/>
    <property type="match status" value="1"/>
</dbReference>
<dbReference type="Gene3D" id="3.30.360.10">
    <property type="entry name" value="Dihydrodipicolinate Reductase, domain 2"/>
    <property type="match status" value="1"/>
</dbReference>
<dbReference type="Gene3D" id="3.40.50.720">
    <property type="entry name" value="NAD(P)-binding Rossmann-like Domain"/>
    <property type="match status" value="1"/>
</dbReference>
<dbReference type="InterPro" id="IPR036393">
    <property type="entry name" value="AceGlu_kinase-like_sf"/>
</dbReference>
<dbReference type="InterPro" id="IPR049638">
    <property type="entry name" value="AK-HD"/>
</dbReference>
<dbReference type="InterPro" id="IPR041743">
    <property type="entry name" value="AK-HSDH_N"/>
</dbReference>
<dbReference type="InterPro" id="IPR001048">
    <property type="entry name" value="Asp/Glu/Uridylate_kinase"/>
</dbReference>
<dbReference type="InterPro" id="IPR005106">
    <property type="entry name" value="Asp/hSer_DH_NAD-bd"/>
</dbReference>
<dbReference type="InterPro" id="IPR001341">
    <property type="entry name" value="Asp_kinase"/>
</dbReference>
<dbReference type="InterPro" id="IPR042199">
    <property type="entry name" value="AsparK_Bifunc_asparK/hSer_DH"/>
</dbReference>
<dbReference type="InterPro" id="IPR018042">
    <property type="entry name" value="Aspartate_kinase_CS"/>
</dbReference>
<dbReference type="InterPro" id="IPR011147">
    <property type="entry name" value="Bifunc_Aspkin/hSer_DH"/>
</dbReference>
<dbReference type="InterPro" id="IPR001342">
    <property type="entry name" value="HDH_cat"/>
</dbReference>
<dbReference type="InterPro" id="IPR019811">
    <property type="entry name" value="HDH_CS"/>
</dbReference>
<dbReference type="InterPro" id="IPR036291">
    <property type="entry name" value="NAD(P)-bd_dom_sf"/>
</dbReference>
<dbReference type="NCBIfam" id="TIGR00657">
    <property type="entry name" value="asp_kinases"/>
    <property type="match status" value="1"/>
</dbReference>
<dbReference type="NCBIfam" id="NF007003">
    <property type="entry name" value="PRK09466.1"/>
    <property type="match status" value="1"/>
</dbReference>
<dbReference type="PANTHER" id="PTHR43070">
    <property type="match status" value="1"/>
</dbReference>
<dbReference type="PANTHER" id="PTHR43070:SF3">
    <property type="entry name" value="HOMOSERINE DEHYDROGENASE"/>
    <property type="match status" value="1"/>
</dbReference>
<dbReference type="Pfam" id="PF00696">
    <property type="entry name" value="AA_kinase"/>
    <property type="match status" value="1"/>
</dbReference>
<dbReference type="Pfam" id="PF00742">
    <property type="entry name" value="Homoserine_dh"/>
    <property type="match status" value="1"/>
</dbReference>
<dbReference type="Pfam" id="PF03447">
    <property type="entry name" value="NAD_binding_3"/>
    <property type="match status" value="1"/>
</dbReference>
<dbReference type="PIRSF" id="PIRSF000727">
    <property type="entry name" value="ThrA"/>
    <property type="match status" value="1"/>
</dbReference>
<dbReference type="SUPFAM" id="SSF53633">
    <property type="entry name" value="Carbamate kinase-like"/>
    <property type="match status" value="1"/>
</dbReference>
<dbReference type="SUPFAM" id="SSF55347">
    <property type="entry name" value="Glyceraldehyde-3-phosphate dehydrogenase-like, C-terminal domain"/>
    <property type="match status" value="1"/>
</dbReference>
<dbReference type="SUPFAM" id="SSF51735">
    <property type="entry name" value="NAD(P)-binding Rossmann-fold domains"/>
    <property type="match status" value="1"/>
</dbReference>
<dbReference type="PROSITE" id="PS00324">
    <property type="entry name" value="ASPARTOKINASE"/>
    <property type="match status" value="1"/>
</dbReference>
<dbReference type="PROSITE" id="PS01042">
    <property type="entry name" value="HOMOSER_DHGENASE"/>
    <property type="match status" value="1"/>
</dbReference>
<accession>P00562</accession>
<accession>P77856</accession>
<accession>Q2M8N6</accession>
<evidence type="ECO:0000250" key="1">
    <source>
        <dbReference type="UniProtKB" id="F9VNG5"/>
    </source>
</evidence>
<evidence type="ECO:0000250" key="2">
    <source>
        <dbReference type="UniProtKB" id="O58802"/>
    </source>
</evidence>
<evidence type="ECO:0000250" key="3">
    <source>
        <dbReference type="UniProtKB" id="P31116"/>
    </source>
</evidence>
<evidence type="ECO:0000250" key="4">
    <source>
        <dbReference type="UniProtKB" id="Q9SA18"/>
    </source>
</evidence>
<evidence type="ECO:0000255" key="5"/>
<evidence type="ECO:0000269" key="6">
    <source>
    </source>
</evidence>
<evidence type="ECO:0000305" key="7"/>
<comment type="function">
    <text evidence="4">Bifunctional aspartate kinase and homoserine dehydrogenase that catalyzes the first and the third steps toward the synthesis of lysine, methionine and threonine from aspartate.</text>
</comment>
<comment type="catalytic activity">
    <reaction evidence="4">
        <text>L-homoserine + NADP(+) = L-aspartate 4-semialdehyde + NADPH + H(+)</text>
        <dbReference type="Rhea" id="RHEA:15761"/>
        <dbReference type="ChEBI" id="CHEBI:15378"/>
        <dbReference type="ChEBI" id="CHEBI:57476"/>
        <dbReference type="ChEBI" id="CHEBI:57783"/>
        <dbReference type="ChEBI" id="CHEBI:58349"/>
        <dbReference type="ChEBI" id="CHEBI:537519"/>
        <dbReference type="EC" id="1.1.1.3"/>
    </reaction>
    <physiologicalReaction direction="right-to-left" evidence="4">
        <dbReference type="Rhea" id="RHEA:15763"/>
    </physiologicalReaction>
</comment>
<comment type="catalytic activity">
    <reaction evidence="4">
        <text>L-homoserine + NAD(+) = L-aspartate 4-semialdehyde + NADH + H(+)</text>
        <dbReference type="Rhea" id="RHEA:15757"/>
        <dbReference type="ChEBI" id="CHEBI:15378"/>
        <dbReference type="ChEBI" id="CHEBI:57476"/>
        <dbReference type="ChEBI" id="CHEBI:57540"/>
        <dbReference type="ChEBI" id="CHEBI:57945"/>
        <dbReference type="ChEBI" id="CHEBI:537519"/>
        <dbReference type="EC" id="1.1.1.3"/>
    </reaction>
    <physiologicalReaction direction="right-to-left" evidence="4">
        <dbReference type="Rhea" id="RHEA:15759"/>
    </physiologicalReaction>
</comment>
<comment type="catalytic activity">
    <reaction evidence="4">
        <text>L-aspartate + ATP = 4-phospho-L-aspartate + ADP</text>
        <dbReference type="Rhea" id="RHEA:23776"/>
        <dbReference type="ChEBI" id="CHEBI:29991"/>
        <dbReference type="ChEBI" id="CHEBI:30616"/>
        <dbReference type="ChEBI" id="CHEBI:57535"/>
        <dbReference type="ChEBI" id="CHEBI:456216"/>
        <dbReference type="EC" id="2.7.2.4"/>
    </reaction>
    <physiologicalReaction direction="left-to-right" evidence="4">
        <dbReference type="Rhea" id="RHEA:23777"/>
    </physiologicalReaction>
</comment>
<comment type="cofactor">
    <cofactor evidence="3">
        <name>a metal cation</name>
        <dbReference type="ChEBI" id="CHEBI:25213"/>
    </cofactor>
    <text evidence="3">A sodium ion is seen in the structure; a metal ion may subtly affect the relative position of the nucleotide-binding region to influence enzyme activity, and could increase the stability of the enzyme.</text>
</comment>
<comment type="pathway">
    <text evidence="4">Amino-acid biosynthesis; L-lysine biosynthesis via DAP pathway; (S)-tetrahydrodipicolinate from L-aspartate: step 1/4.</text>
</comment>
<comment type="pathway">
    <text evidence="4">Amino-acid biosynthesis; L-methionine biosynthesis via de novo pathway; L-homoserine from L-aspartate: step 1/3.</text>
</comment>
<comment type="pathway">
    <text evidence="4">Amino-acid biosynthesis; L-methionine biosynthesis via de novo pathway; L-homoserine from L-aspartate: step 3/3.</text>
</comment>
<comment type="pathway">
    <text evidence="4">Amino-acid biosynthesis; L-threonine biosynthesis; L-threonine from L-aspartate: step 1/5.</text>
</comment>
<comment type="pathway">
    <text evidence="4">Amino-acid biosynthesis; L-threonine biosynthesis; L-threonine from L-aspartate: step 3/5.</text>
</comment>
<comment type="subunit">
    <text>Homotetramer.</text>
</comment>
<comment type="miscellaneous">
    <text>Aspartokinase I-homoserine dehydrogenase I and aspartokinase III also catalyze the same reaction(s).</text>
</comment>
<comment type="similarity">
    <text evidence="7">In the N-terminal section; belongs to the aspartokinase family.</text>
</comment>
<comment type="similarity">
    <text evidence="7">In the C-terminal section; belongs to the homoserine dehydrogenase family.</text>
</comment>
<gene>
    <name type="primary">metL</name>
    <name type="synonym">metM</name>
    <name type="ordered locus">b3940</name>
    <name type="ordered locus">JW3911</name>
</gene>